<protein>
    <recommendedName>
        <fullName>Tumor necrosis factor receptor superfamily member 16</fullName>
    </recommendedName>
    <alternativeName>
        <fullName>Gp80-LNGFR</fullName>
    </alternativeName>
    <alternativeName>
        <fullName>Low affinity neurotrophin receptor p75NTR</fullName>
    </alternativeName>
    <alternativeName>
        <fullName>Low-affinity nerve growth factor receptor</fullName>
        <shortName>NGF receptor</shortName>
    </alternativeName>
    <alternativeName>
        <fullName>Low-affinity nerve growth factor receptor p75NGFR</fullName>
    </alternativeName>
    <alternativeName>
        <fullName>Low-affinity nerve growth factor receptor p75NGR</fullName>
    </alternativeName>
    <alternativeName>
        <fullName>p75 ICD</fullName>
    </alternativeName>
</protein>
<gene>
    <name type="primary">NGFR</name>
    <name type="synonym">TNFRSF16</name>
</gene>
<dbReference type="PIR" id="JN0006">
    <property type="entry name" value="JN0006"/>
</dbReference>
<dbReference type="RefSeq" id="NP_001139605.2">
    <property type="nucleotide sequence ID" value="NM_001146133.2"/>
</dbReference>
<dbReference type="SMR" id="P18519"/>
<dbReference type="FunCoup" id="P18519">
    <property type="interactions" value="48"/>
</dbReference>
<dbReference type="STRING" id="9031.ENSGALP00000046489"/>
<dbReference type="GlyCosmos" id="P18519">
    <property type="glycosylation" value="1 site, No reported glycans"/>
</dbReference>
<dbReference type="GlyGen" id="P18519">
    <property type="glycosylation" value="2 sites"/>
</dbReference>
<dbReference type="iPTMnet" id="P18519"/>
<dbReference type="PaxDb" id="9031-ENSGALP00000041297"/>
<dbReference type="GeneID" id="425805"/>
<dbReference type="VEuPathDB" id="HostDB:geneid_425805"/>
<dbReference type="eggNOG" id="ENOG502QWPN">
    <property type="taxonomic scope" value="Eukaryota"/>
</dbReference>
<dbReference type="InParanoid" id="P18519"/>
<dbReference type="OMA" id="YSCQDKQ"/>
<dbReference type="OrthoDB" id="10048028at2759"/>
<dbReference type="PhylomeDB" id="P18519"/>
<dbReference type="Reactome" id="R-GGA-193692">
    <property type="pathway name" value="Regulated proteolysis of p75NTR"/>
</dbReference>
<dbReference type="Reactome" id="R-GGA-205017">
    <property type="pathway name" value="NFG and proNGF binds to p75NTR"/>
</dbReference>
<dbReference type="Reactome" id="R-GGA-205043">
    <property type="pathway name" value="NRIF signals cell death from the nucleus"/>
</dbReference>
<dbReference type="Reactome" id="R-GGA-209543">
    <property type="pathway name" value="p75NTR recruits signalling complexes"/>
</dbReference>
<dbReference type="Reactome" id="R-GGA-209560">
    <property type="pathway name" value="NF-kB is activated and signals survival"/>
</dbReference>
<dbReference type="Reactome" id="R-GGA-209563">
    <property type="pathway name" value="Axonal growth stimulation"/>
</dbReference>
<dbReference type="PRO" id="PR:P18519"/>
<dbReference type="Proteomes" id="UP000000539">
    <property type="component" value="Chromosome 27"/>
</dbReference>
<dbReference type="Bgee" id="ENSGALG00000035950">
    <property type="expression patterns" value="Expressed in spleen and 6 other cell types or tissues"/>
</dbReference>
<dbReference type="GO" id="GO:0009986">
    <property type="term" value="C:cell surface"/>
    <property type="evidence" value="ECO:0000318"/>
    <property type="project" value="GO_Central"/>
</dbReference>
<dbReference type="GO" id="GO:0043197">
    <property type="term" value="C:dendritic spine"/>
    <property type="evidence" value="ECO:0007669"/>
    <property type="project" value="UniProtKB-SubCell"/>
</dbReference>
<dbReference type="GO" id="GO:0030426">
    <property type="term" value="C:growth cone"/>
    <property type="evidence" value="ECO:0007669"/>
    <property type="project" value="UniProtKB-SubCell"/>
</dbReference>
<dbReference type="GO" id="GO:0043204">
    <property type="term" value="C:perikaryon"/>
    <property type="evidence" value="ECO:0007669"/>
    <property type="project" value="UniProtKB-SubCell"/>
</dbReference>
<dbReference type="GO" id="GO:0005886">
    <property type="term" value="C:plasma membrane"/>
    <property type="evidence" value="ECO:0000314"/>
    <property type="project" value="UniProtKB"/>
</dbReference>
<dbReference type="GO" id="GO:0015026">
    <property type="term" value="F:coreceptor activity"/>
    <property type="evidence" value="ECO:0000318"/>
    <property type="project" value="GO_Central"/>
</dbReference>
<dbReference type="GO" id="GO:0005035">
    <property type="term" value="F:death receptor activity"/>
    <property type="evidence" value="ECO:0000318"/>
    <property type="project" value="GO_Central"/>
</dbReference>
<dbReference type="GO" id="GO:0048406">
    <property type="term" value="F:nerve growth factor binding"/>
    <property type="evidence" value="ECO:0000314"/>
    <property type="project" value="UniProtKB"/>
</dbReference>
<dbReference type="GO" id="GO:0043121">
    <property type="term" value="F:neurotrophin binding"/>
    <property type="evidence" value="ECO:0000314"/>
    <property type="project" value="UniProtKB"/>
</dbReference>
<dbReference type="GO" id="GO:0006915">
    <property type="term" value="P:apoptotic process"/>
    <property type="evidence" value="ECO:0007669"/>
    <property type="project" value="UniProtKB-KW"/>
</dbReference>
<dbReference type="GO" id="GO:0030154">
    <property type="term" value="P:cell differentiation"/>
    <property type="evidence" value="ECO:0007669"/>
    <property type="project" value="UniProtKB-KW"/>
</dbReference>
<dbReference type="GO" id="GO:0032922">
    <property type="term" value="P:circadian regulation of gene expression"/>
    <property type="evidence" value="ECO:0000250"/>
    <property type="project" value="UniProtKB"/>
</dbReference>
<dbReference type="GO" id="GO:0007399">
    <property type="term" value="P:nervous system development"/>
    <property type="evidence" value="ECO:0007669"/>
    <property type="project" value="UniProtKB-KW"/>
</dbReference>
<dbReference type="GO" id="GO:0007266">
    <property type="term" value="P:Rho protein signal transduction"/>
    <property type="evidence" value="ECO:0000318"/>
    <property type="project" value="GO_Central"/>
</dbReference>
<dbReference type="CDD" id="cd08311">
    <property type="entry name" value="Death_p75NR"/>
    <property type="match status" value="1"/>
</dbReference>
<dbReference type="CDD" id="cd13416">
    <property type="entry name" value="TNFRSF16"/>
    <property type="match status" value="1"/>
</dbReference>
<dbReference type="FunFam" id="2.10.50.10:FF:000013">
    <property type="entry name" value="Tumor necrosis factor receptor superfamily member 16"/>
    <property type="match status" value="1"/>
</dbReference>
<dbReference type="FunFam" id="2.10.50.10:FF:000012">
    <property type="entry name" value="tumor necrosis factor receptor superfamily member 16"/>
    <property type="match status" value="1"/>
</dbReference>
<dbReference type="FunFam" id="2.10.50.10:FF:000027">
    <property type="entry name" value="tumor necrosis factor receptor superfamily member 16"/>
    <property type="match status" value="1"/>
</dbReference>
<dbReference type="Gene3D" id="6.10.250.1780">
    <property type="match status" value="1"/>
</dbReference>
<dbReference type="Gene3D" id="1.10.533.10">
    <property type="entry name" value="Death Domain, Fas"/>
    <property type="match status" value="1"/>
</dbReference>
<dbReference type="Gene3D" id="2.10.50.10">
    <property type="entry name" value="Tumor Necrosis Factor Receptor, subunit A, domain 2"/>
    <property type="match status" value="4"/>
</dbReference>
<dbReference type="InterPro" id="IPR011029">
    <property type="entry name" value="DEATH-like_dom_sf"/>
</dbReference>
<dbReference type="InterPro" id="IPR000488">
    <property type="entry name" value="Death_dom"/>
</dbReference>
<dbReference type="InterPro" id="IPR052302">
    <property type="entry name" value="Neurotrophin_rcpt-DD"/>
</dbReference>
<dbReference type="InterPro" id="IPR001368">
    <property type="entry name" value="TNFR/NGFR_Cys_rich_reg"/>
</dbReference>
<dbReference type="InterPro" id="IPR041448">
    <property type="entry name" value="TNFR16_TM"/>
</dbReference>
<dbReference type="InterPro" id="IPR022325">
    <property type="entry name" value="TNFR_16"/>
</dbReference>
<dbReference type="InterPro" id="IPR034046">
    <property type="entry name" value="TNFRSF16_N"/>
</dbReference>
<dbReference type="PANTHER" id="PTHR46605">
    <property type="entry name" value="TUMOR NECROSIS FACTOR RECEPTOR"/>
    <property type="match status" value="1"/>
</dbReference>
<dbReference type="PANTHER" id="PTHR46605:SF3">
    <property type="entry name" value="TUMOR NECROSIS FACTOR RECEPTOR SUPERFAMILY MEMBER 16"/>
    <property type="match status" value="1"/>
</dbReference>
<dbReference type="Pfam" id="PF00531">
    <property type="entry name" value="Death"/>
    <property type="match status" value="1"/>
</dbReference>
<dbReference type="Pfam" id="PF18422">
    <property type="entry name" value="TNFR_16_TM"/>
    <property type="match status" value="1"/>
</dbReference>
<dbReference type="Pfam" id="PF00020">
    <property type="entry name" value="TNFR_c6"/>
    <property type="match status" value="3"/>
</dbReference>
<dbReference type="PRINTS" id="PR01966">
    <property type="entry name" value="TNFACTORR16"/>
</dbReference>
<dbReference type="SMART" id="SM00005">
    <property type="entry name" value="DEATH"/>
    <property type="match status" value="1"/>
</dbReference>
<dbReference type="SMART" id="SM00208">
    <property type="entry name" value="TNFR"/>
    <property type="match status" value="4"/>
</dbReference>
<dbReference type="SUPFAM" id="SSF47986">
    <property type="entry name" value="DEATH domain"/>
    <property type="match status" value="1"/>
</dbReference>
<dbReference type="SUPFAM" id="SSF57586">
    <property type="entry name" value="TNF receptor-like"/>
    <property type="match status" value="4"/>
</dbReference>
<dbReference type="PROSITE" id="PS50017">
    <property type="entry name" value="DEATH_DOMAIN"/>
    <property type="match status" value="1"/>
</dbReference>
<dbReference type="PROSITE" id="PS00652">
    <property type="entry name" value="TNFR_NGFR_1"/>
    <property type="match status" value="3"/>
</dbReference>
<dbReference type="PROSITE" id="PS50050">
    <property type="entry name" value="TNFR_NGFR_2"/>
    <property type="match status" value="3"/>
</dbReference>
<accession>P18519</accession>
<keyword id="KW-0053">Apoptosis</keyword>
<keyword id="KW-0090">Biological rhythms</keyword>
<keyword id="KW-1003">Cell membrane</keyword>
<keyword id="KW-0966">Cell projection</keyword>
<keyword id="KW-0217">Developmental protein</keyword>
<keyword id="KW-0221">Differentiation</keyword>
<keyword id="KW-1015">Disulfide bond</keyword>
<keyword id="KW-0325">Glycoprotein</keyword>
<keyword id="KW-0472">Membrane</keyword>
<keyword id="KW-0524">Neurogenesis</keyword>
<keyword id="KW-0597">Phosphoprotein</keyword>
<keyword id="KW-0675">Receptor</keyword>
<keyword id="KW-1185">Reference proteome</keyword>
<keyword id="KW-0677">Repeat</keyword>
<keyword id="KW-0732">Signal</keyword>
<keyword id="KW-0770">Synapse</keyword>
<keyword id="KW-0812">Transmembrane</keyword>
<keyword id="KW-1133">Transmembrane helix</keyword>
<reference key="1">
    <citation type="journal article" date="1989" name="Neuron">
        <title>Structure and developmental expression of the nerve growth factor receptor in the chicken central nervous system.</title>
        <authorList>
            <person name="Large T.H."/>
            <person name="Weskamp G."/>
            <person name="Helder J.C."/>
            <person name="Radeke M.J."/>
            <person name="Misko T.P."/>
            <person name="Shooter E.M."/>
            <person name="Reichardt L.F."/>
        </authorList>
    </citation>
    <scope>NUCLEOTIDE SEQUENCE [MRNA]</scope>
    <scope>TISSUE SPECIFICITY</scope>
    <source>
        <tissue>Brain</tissue>
    </source>
</reference>
<reference key="2">
    <citation type="journal article" date="1990" name="Dev. Biol.">
        <title>Structure and developmental expression of the chicken NGF receptor.</title>
        <authorList>
            <person name="Heuer J.G."/>
            <person name="Fatemie-Nainie S."/>
            <person name="Wheeler E.F."/>
            <person name="Bothwell M."/>
        </authorList>
    </citation>
    <scope>NUCLEOTIDE SEQUENCE [MRNA] OF 21-416</scope>
</reference>
<comment type="function">
    <text evidence="1 3 4">Low affinity receptor which can bind to NGF, BDNF, NTF3, and NTF4. Forms a heterodimeric receptor with SORCS2 that binds the precursor forms of NGF, BDNF and NTF3 with high affinity, and has much lower affinity for mature NGF and BDNF (By similarity). Plays an important role in differentiation and survival of specific neuronal populations during development (By similarity). Can mediate cell survival as well as cell death of neural cells. Plays a role in the inactivation of RHOA (By similarity). Necessary for the circadian oscillation of clock genes in the suprachiasmatic nucleus (SCmgetaN) of the brain and in liver and of the genes involved in glucose and lipid metabolism in the liver (By similarity).</text>
</comment>
<comment type="subunit">
    <text evidence="2 3">Homodimer; disulfide-linked (By similarity). Heterodimer with SORCS2. The extracellular domains of the heterodimer bind NGF (By similarity).</text>
</comment>
<comment type="subcellular location">
    <subcellularLocation>
        <location evidence="4">Cell membrane</location>
        <topology evidence="4">Single-pass type I membrane protein</topology>
    </subcellularLocation>
    <subcellularLocation>
        <location evidence="4">Perikaryon</location>
    </subcellularLocation>
    <subcellularLocation>
        <location evidence="4">Cell projection</location>
        <location evidence="4">Growth cone</location>
    </subcellularLocation>
    <subcellularLocation>
        <location evidence="4">Cell projection</location>
        <location evidence="4">Dendritic spine</location>
    </subcellularLocation>
</comment>
<comment type="tissue specificity">
    <text evidence="9">Detected in embryonic dorsal root ganglion and retina.</text>
</comment>
<comment type="PTM">
    <text>N- and O-glycosylated.</text>
</comment>
<comment type="PTM">
    <text>Phosphorylated on serine residues.</text>
</comment>
<feature type="signal peptide" evidence="5">
    <location>
        <begin position="1"/>
        <end position="19"/>
    </location>
</feature>
<feature type="chain" id="PRO_0000034594" description="Tumor necrosis factor receptor superfamily member 16">
    <location>
        <begin position="20"/>
        <end position="416"/>
    </location>
</feature>
<feature type="topological domain" description="Extracellular" evidence="5">
    <location>
        <begin position="29"/>
        <end position="239"/>
    </location>
</feature>
<feature type="transmembrane region" description="Helical" evidence="5">
    <location>
        <begin position="240"/>
        <end position="261"/>
    </location>
</feature>
<feature type="topological domain" description="Cytoplasmic" evidence="5">
    <location>
        <begin position="262"/>
        <end position="416"/>
    </location>
</feature>
<feature type="repeat" description="TNFR-Cys 1">
    <location>
        <begin position="23"/>
        <end position="57"/>
    </location>
</feature>
<feature type="repeat" description="TNFR-Cys 2">
    <location>
        <begin position="58"/>
        <end position="99"/>
    </location>
</feature>
<feature type="repeat" description="TNFR-Cys 3">
    <location>
        <begin position="100"/>
        <end position="138"/>
    </location>
</feature>
<feature type="repeat" description="TNFR-Cys 4">
    <location>
        <begin position="140"/>
        <end position="180"/>
    </location>
</feature>
<feature type="domain" description="Death" evidence="6">
    <location>
        <begin position="333"/>
        <end position="410"/>
    </location>
</feature>
<feature type="region of interest" description="Disordered" evidence="8">
    <location>
        <begin position="270"/>
        <end position="328"/>
    </location>
</feature>
<feature type="compositionally biased region" description="Polar residues" evidence="8">
    <location>
        <begin position="270"/>
        <end position="284"/>
    </location>
</feature>
<feature type="compositionally biased region" description="Polar residues" evidence="8">
    <location>
        <begin position="294"/>
        <end position="315"/>
    </location>
</feature>
<feature type="glycosylation site" description="N-linked (GlcNAc...) asparagine" evidence="5">
    <location>
        <position position="52"/>
    </location>
</feature>
<feature type="disulfide bond" evidence="7">
    <location>
        <begin position="24"/>
        <end position="35"/>
    </location>
</feature>
<feature type="disulfide bond" evidence="7">
    <location>
        <begin position="36"/>
        <end position="49"/>
    </location>
</feature>
<feature type="disulfide bond" evidence="7">
    <location>
        <begin position="39"/>
        <end position="56"/>
    </location>
</feature>
<feature type="disulfide bond" evidence="7">
    <location>
        <begin position="59"/>
        <end position="75"/>
    </location>
</feature>
<feature type="disulfide bond" evidence="7">
    <location>
        <begin position="78"/>
        <end position="91"/>
    </location>
</feature>
<feature type="disulfide bond" evidence="7">
    <location>
        <begin position="81"/>
        <end position="99"/>
    </location>
</feature>
<feature type="disulfide bond" evidence="7">
    <location>
        <begin position="101"/>
        <end position="114"/>
    </location>
</feature>
<feature type="disulfide bond" evidence="7">
    <location>
        <begin position="117"/>
        <end position="130"/>
    </location>
</feature>
<feature type="disulfide bond" evidence="7">
    <location>
        <begin position="120"/>
        <end position="138"/>
    </location>
</feature>
<feature type="disulfide bond" evidence="7">
    <location>
        <begin position="141"/>
        <end position="156"/>
    </location>
</feature>
<feature type="disulfide bond" evidence="7">
    <location>
        <begin position="159"/>
        <end position="172"/>
    </location>
</feature>
<feature type="disulfide bond" evidence="7">
    <location>
        <begin position="162"/>
        <end position="180"/>
    </location>
</feature>
<feature type="sequence conflict" description="In Ref. 2." evidence="10" ref="2">
    <original>C</original>
    <variation>Y</variation>
    <location>
        <position position="36"/>
    </location>
</feature>
<feature type="sequence conflict" description="In Ref. 2." evidence="10" ref="2">
    <original>T</original>
    <variation>K</variation>
    <location>
        <position position="173"/>
    </location>
</feature>
<feature type="sequence conflict" description="In Ref. 2." evidence="10" ref="2">
    <original>N</original>
    <variation>S</variation>
    <location>
        <position position="276"/>
    </location>
</feature>
<feature type="sequence conflict" description="In Ref. 2." evidence="10" ref="2">
    <original>K</original>
    <variation>R</variation>
    <location>
        <position position="396"/>
    </location>
</feature>
<evidence type="ECO:0000250" key="1"/>
<evidence type="ECO:0000250" key="2">
    <source>
        <dbReference type="UniProtKB" id="P07174"/>
    </source>
</evidence>
<evidence type="ECO:0000250" key="3">
    <source>
        <dbReference type="UniProtKB" id="P08138"/>
    </source>
</evidence>
<evidence type="ECO:0000250" key="4">
    <source>
        <dbReference type="UniProtKB" id="Q9Z0W1"/>
    </source>
</evidence>
<evidence type="ECO:0000255" key="5"/>
<evidence type="ECO:0000255" key="6">
    <source>
        <dbReference type="PROSITE-ProRule" id="PRU00064"/>
    </source>
</evidence>
<evidence type="ECO:0000255" key="7">
    <source>
        <dbReference type="PROSITE-ProRule" id="PRU00206"/>
    </source>
</evidence>
<evidence type="ECO:0000256" key="8">
    <source>
        <dbReference type="SAM" id="MobiDB-lite"/>
    </source>
</evidence>
<evidence type="ECO:0000269" key="9">
    <source>
    </source>
</evidence>
<evidence type="ECO:0000305" key="10"/>
<proteinExistence type="evidence at transcript level"/>
<sequence length="416" mass="44654">MAGFVPLLLLLLPAGPTWGSKEKCLTKMYTTSGECCKACNLGEGVVQPCGVNQTVCEPCLDSVTYSDTVSATEPCKPCTQCVGLHSMSAPCVESDDAVCRCAYGYFQDELSGSCKECSICEVGFGLMFPCRDSQDTVCEECPEGTFSDEANFVDPCLPCTICEENEVMVKECTATSDAECRDLHPRWTTHTPSLAGSDSPEPITRDPFNTEGMATTLADIVTTVMGSSQPVVSRGTADNLIPVYCSILAAVVVGLVAYIAFKRWNSCKQNKQGANNRPVNQTPSPEGEKLHSDSGISVDSQSLHDQQPPNQSTQGPAPKGDGSLYASLPPSKQEEVEKLLSSSAEETWRQLAGELGYKEDLIDCFTREESPARALLADWSAKETATLDALLVALRKIQRGDIAESLYSESTATSPV</sequence>
<organism>
    <name type="scientific">Gallus gallus</name>
    <name type="common">Chicken</name>
    <dbReference type="NCBI Taxonomy" id="9031"/>
    <lineage>
        <taxon>Eukaryota</taxon>
        <taxon>Metazoa</taxon>
        <taxon>Chordata</taxon>
        <taxon>Craniata</taxon>
        <taxon>Vertebrata</taxon>
        <taxon>Euteleostomi</taxon>
        <taxon>Archelosauria</taxon>
        <taxon>Archosauria</taxon>
        <taxon>Dinosauria</taxon>
        <taxon>Saurischia</taxon>
        <taxon>Theropoda</taxon>
        <taxon>Coelurosauria</taxon>
        <taxon>Aves</taxon>
        <taxon>Neognathae</taxon>
        <taxon>Galloanserae</taxon>
        <taxon>Galliformes</taxon>
        <taxon>Phasianidae</taxon>
        <taxon>Phasianinae</taxon>
        <taxon>Gallus</taxon>
    </lineage>
</organism>
<name>TNR16_CHICK</name>